<proteinExistence type="inferred from homology"/>
<sequence>MGRFVVWPCELDSRLSRKYGRIIPKNLAIEKPSLDEIIEVAETLNLKIVEVDREKLNPRLSGIDEELRTYGRIIIESPYGKVKTLRLIAQKIREFRRRR</sequence>
<comment type="function">
    <text evidence="1">Involved in targeting and insertion of nascent membrane proteins into the cytoplasmic membrane. Binds directly to 7S RNA and mediates binding of the 54 kDa subunit of the SRP.</text>
</comment>
<comment type="subunit">
    <text evidence="1">Part of the signal recognition particle protein translocation system, which is composed of SRP and FtsY. Archaeal SRP consists of a 7S RNA molecule of 300 nucleotides and two protein subunits: SRP54 and SRP19.</text>
</comment>
<comment type="subcellular location">
    <subcellularLocation>
        <location evidence="1">Cytoplasm</location>
    </subcellularLocation>
</comment>
<comment type="similarity">
    <text evidence="1">Belongs to the SRP19 family.</text>
</comment>
<reference key="1">
    <citation type="journal article" date="1998" name="DNA Res.">
        <title>Complete sequence and gene organization of the genome of a hyper-thermophilic archaebacterium, Pyrococcus horikoshii OT3.</title>
        <authorList>
            <person name="Kawarabayasi Y."/>
            <person name="Sawada M."/>
            <person name="Horikawa H."/>
            <person name="Haikawa Y."/>
            <person name="Hino Y."/>
            <person name="Yamamoto S."/>
            <person name="Sekine M."/>
            <person name="Baba S."/>
            <person name="Kosugi H."/>
            <person name="Hosoyama A."/>
            <person name="Nagai Y."/>
            <person name="Sakai M."/>
            <person name="Ogura K."/>
            <person name="Otsuka R."/>
            <person name="Nakazawa H."/>
            <person name="Takamiya M."/>
            <person name="Ohfuku Y."/>
            <person name="Funahashi T."/>
            <person name="Tanaka T."/>
            <person name="Kudoh Y."/>
            <person name="Yamazaki J."/>
            <person name="Kushida N."/>
            <person name="Oguchi A."/>
            <person name="Aoki K."/>
            <person name="Yoshizawa T."/>
            <person name="Nakamura Y."/>
            <person name="Robb F.T."/>
            <person name="Horikoshi K."/>
            <person name="Masuchi Y."/>
            <person name="Shizuya H."/>
            <person name="Kikuchi H."/>
        </authorList>
    </citation>
    <scope>NUCLEOTIDE SEQUENCE [LARGE SCALE GENOMIC DNA]</scope>
    <source>
        <strain>ATCC 700860 / DSM 12428 / JCM 9974 / NBRC 100139 / OT-3</strain>
    </source>
</reference>
<feature type="chain" id="PRO_0000135224" description="Signal recognition particle 19 kDa protein">
    <location>
        <begin position="1"/>
        <end position="99"/>
    </location>
</feature>
<gene>
    <name evidence="1" type="primary">srp19</name>
    <name type="ordered locus">PH1856.1</name>
    <name type="ORF">PHS054</name>
</gene>
<name>SRP19_PYRHO</name>
<keyword id="KW-0963">Cytoplasm</keyword>
<keyword id="KW-0687">Ribonucleoprotein</keyword>
<keyword id="KW-0694">RNA-binding</keyword>
<keyword id="KW-0733">Signal recognition particle</keyword>
<protein>
    <recommendedName>
        <fullName evidence="1">Signal recognition particle 19 kDa protein</fullName>
        <shortName evidence="1">SRP19</shortName>
    </recommendedName>
</protein>
<evidence type="ECO:0000255" key="1">
    <source>
        <dbReference type="HAMAP-Rule" id="MF_00305"/>
    </source>
</evidence>
<organism>
    <name type="scientific">Pyrococcus horikoshii (strain ATCC 700860 / DSM 12428 / JCM 9974 / NBRC 100139 / OT-3)</name>
    <dbReference type="NCBI Taxonomy" id="70601"/>
    <lineage>
        <taxon>Archaea</taxon>
        <taxon>Methanobacteriati</taxon>
        <taxon>Methanobacteriota</taxon>
        <taxon>Thermococci</taxon>
        <taxon>Thermococcales</taxon>
        <taxon>Thermococcaceae</taxon>
        <taxon>Pyrococcus</taxon>
    </lineage>
</organism>
<accession>O74102</accession>
<dbReference type="EMBL" id="BA000001">
    <property type="protein sequence ID" value="BAA30978.1"/>
    <property type="molecule type" value="Genomic_DNA"/>
</dbReference>
<dbReference type="PIR" id="C71198">
    <property type="entry name" value="C71198"/>
</dbReference>
<dbReference type="RefSeq" id="WP_010885915.1">
    <property type="nucleotide sequence ID" value="NC_000961.1"/>
</dbReference>
<dbReference type="SMR" id="O74102"/>
<dbReference type="STRING" id="70601.gene:9378861"/>
<dbReference type="EnsemblBacteria" id="BAA30978">
    <property type="protein sequence ID" value="BAA30978"/>
    <property type="gene ID" value="BAA30978"/>
</dbReference>
<dbReference type="GeneID" id="1442697"/>
<dbReference type="KEGG" id="pho:PHS054"/>
<dbReference type="eggNOG" id="arCOG01217">
    <property type="taxonomic scope" value="Archaea"/>
</dbReference>
<dbReference type="OrthoDB" id="56356at2157"/>
<dbReference type="Proteomes" id="UP000000752">
    <property type="component" value="Chromosome"/>
</dbReference>
<dbReference type="GO" id="GO:0048500">
    <property type="term" value="C:signal recognition particle"/>
    <property type="evidence" value="ECO:0007669"/>
    <property type="project" value="UniProtKB-UniRule"/>
</dbReference>
<dbReference type="GO" id="GO:0008312">
    <property type="term" value="F:7S RNA binding"/>
    <property type="evidence" value="ECO:0007669"/>
    <property type="project" value="UniProtKB-UniRule"/>
</dbReference>
<dbReference type="GO" id="GO:0006614">
    <property type="term" value="P:SRP-dependent cotranslational protein targeting to membrane"/>
    <property type="evidence" value="ECO:0007669"/>
    <property type="project" value="InterPro"/>
</dbReference>
<dbReference type="Gene3D" id="3.30.56.30">
    <property type="entry name" value="Signal recognition particle, SRP19-like subunit"/>
    <property type="match status" value="1"/>
</dbReference>
<dbReference type="HAMAP" id="MF_00305">
    <property type="entry name" value="SRP19"/>
    <property type="match status" value="1"/>
</dbReference>
<dbReference type="InterPro" id="IPR002778">
    <property type="entry name" value="Signal_recog_particle_SRP19"/>
</dbReference>
<dbReference type="InterPro" id="IPR036521">
    <property type="entry name" value="SRP19-like_sf"/>
</dbReference>
<dbReference type="InterPro" id="IPR022938">
    <property type="entry name" value="SRP19_arc-type"/>
</dbReference>
<dbReference type="NCBIfam" id="NF002993">
    <property type="entry name" value="PRK03745.1"/>
    <property type="match status" value="1"/>
</dbReference>
<dbReference type="Pfam" id="PF01922">
    <property type="entry name" value="SRP19"/>
    <property type="match status" value="1"/>
</dbReference>
<dbReference type="SUPFAM" id="SSF69695">
    <property type="entry name" value="SRP19"/>
    <property type="match status" value="1"/>
</dbReference>